<protein>
    <recommendedName>
        <fullName evidence="3">Caerulein precursor fragment BM1</fullName>
    </recommendedName>
    <alternativeName>
        <fullName evidence="3">CPF-BM1</fullName>
    </alternativeName>
</protein>
<comment type="function">
    <text evidence="1">Antimicrobial peptide.</text>
</comment>
<comment type="subcellular location">
    <subcellularLocation>
        <location evidence="2">Secreted</location>
    </subcellularLocation>
</comment>
<comment type="tissue specificity">
    <text evidence="5">Expressed by the skin glands.</text>
</comment>
<comment type="mass spectrometry"/>
<comment type="similarity">
    <text evidence="4">Belongs to the gastrin/cholecystokinin family.</text>
</comment>
<proteinExistence type="evidence at protein level"/>
<name>CFBM1_XENBM</name>
<accession>C0HKK8</accession>
<reference evidence="4" key="1">
    <citation type="journal article" date="2015" name="Peptides">
        <title>Host-defense and trefoil factor family peptides in skin secretions of the Mawa clawed frog Xenopus boumbaensis (Pipidae).</title>
        <authorList>
            <person name="Conlon J.M."/>
            <person name="Mechkarska M."/>
            <person name="Kolodziejek J."/>
            <person name="Leprince J."/>
            <person name="Coquet L."/>
            <person name="Jouenne T."/>
            <person name="Vaudry H."/>
            <person name="Nowotny N."/>
            <person name="King J.D."/>
        </authorList>
    </citation>
    <scope>PROTEIN SEQUENCE</scope>
    <scope>SUBCELLULAR LOCATION</scope>
    <scope>MASS SPECTROMETRY</scope>
    <source>
        <tissue evidence="3">Skin secretion</tissue>
    </source>
</reference>
<dbReference type="GO" id="GO:0005576">
    <property type="term" value="C:extracellular region"/>
    <property type="evidence" value="ECO:0007669"/>
    <property type="project" value="UniProtKB-SubCell"/>
</dbReference>
<dbReference type="GO" id="GO:0006952">
    <property type="term" value="P:defense response"/>
    <property type="evidence" value="ECO:0007669"/>
    <property type="project" value="UniProtKB-KW"/>
</dbReference>
<sequence>GLGSVLGKILKMGANLLGGAPKGA</sequence>
<feature type="peptide" id="PRO_0000440784" description="Caerulein precursor fragment BM1" evidence="2">
    <location>
        <begin position="1"/>
        <end position="24"/>
    </location>
</feature>
<keyword id="KW-0878">Amphibian defense peptide</keyword>
<keyword id="KW-0929">Antimicrobial</keyword>
<keyword id="KW-0903">Direct protein sequencing</keyword>
<keyword id="KW-0964">Secreted</keyword>
<evidence type="ECO:0000250" key="1">
    <source>
        <dbReference type="UniProtKB" id="C0HK89"/>
    </source>
</evidence>
<evidence type="ECO:0000269" key="2">
    <source>
    </source>
</evidence>
<evidence type="ECO:0000303" key="3">
    <source>
    </source>
</evidence>
<evidence type="ECO:0000305" key="4"/>
<evidence type="ECO:0000305" key="5">
    <source>
    </source>
</evidence>
<organism evidence="3">
    <name type="scientific">Xenopus boumbaensis</name>
    <name type="common">Mawa clawed frog</name>
    <dbReference type="NCBI Taxonomy" id="288550"/>
    <lineage>
        <taxon>Eukaryota</taxon>
        <taxon>Metazoa</taxon>
        <taxon>Chordata</taxon>
        <taxon>Craniata</taxon>
        <taxon>Vertebrata</taxon>
        <taxon>Euteleostomi</taxon>
        <taxon>Amphibia</taxon>
        <taxon>Batrachia</taxon>
        <taxon>Anura</taxon>
        <taxon>Pipoidea</taxon>
        <taxon>Pipidae</taxon>
        <taxon>Xenopodinae</taxon>
        <taxon>Xenopus</taxon>
        <taxon>Xenopus</taxon>
    </lineage>
</organism>